<reference key="1">
    <citation type="submission" date="2002-06" db="EMBL/GenBank/DDBJ databases">
        <title>Gj179 Griffithsia japonica ribosome protein L14 gene.</title>
        <authorList>
            <person name="Liu C.L."/>
            <person name="Lee Y.K."/>
            <person name="Lee H.K."/>
        </authorList>
    </citation>
    <scope>NUCLEOTIDE SEQUENCE [MRNA]</scope>
    <source>
        <strain>Gj179</strain>
    </source>
</reference>
<name>RL14_GRIJA</name>
<proteinExistence type="evidence at transcript level"/>
<keyword id="KW-0687">Ribonucleoprotein</keyword>
<keyword id="KW-0689">Ribosomal protein</keyword>
<evidence type="ECO:0000305" key="1"/>
<accession>Q7XYA7</accession>
<comment type="similarity">
    <text evidence="1">Belongs to the eukaryotic ribosomal protein eL14 family.</text>
</comment>
<protein>
    <recommendedName>
        <fullName evidence="1">Large ribosomal subunit protein eL14</fullName>
    </recommendedName>
    <alternativeName>
        <fullName>60S ribosomal protein L14</fullName>
    </alternativeName>
</protein>
<gene>
    <name type="primary">RPL14</name>
</gene>
<feature type="chain" id="PRO_0000132036" description="Large ribosomal subunit protein eL14">
    <location>
        <begin position="1"/>
        <end position="133"/>
    </location>
</feature>
<dbReference type="EMBL" id="AF517854">
    <property type="protein sequence ID" value="AAP80695.1"/>
    <property type="molecule type" value="mRNA"/>
</dbReference>
<dbReference type="SMR" id="Q7XYA7"/>
<dbReference type="GO" id="GO:0022625">
    <property type="term" value="C:cytosolic large ribosomal subunit"/>
    <property type="evidence" value="ECO:0007669"/>
    <property type="project" value="TreeGrafter"/>
</dbReference>
<dbReference type="GO" id="GO:0003723">
    <property type="term" value="F:RNA binding"/>
    <property type="evidence" value="ECO:0007669"/>
    <property type="project" value="InterPro"/>
</dbReference>
<dbReference type="GO" id="GO:0003735">
    <property type="term" value="F:structural constituent of ribosome"/>
    <property type="evidence" value="ECO:0007669"/>
    <property type="project" value="InterPro"/>
</dbReference>
<dbReference type="GO" id="GO:0042273">
    <property type="term" value="P:ribosomal large subunit biogenesis"/>
    <property type="evidence" value="ECO:0007669"/>
    <property type="project" value="TreeGrafter"/>
</dbReference>
<dbReference type="GO" id="GO:0006412">
    <property type="term" value="P:translation"/>
    <property type="evidence" value="ECO:0007669"/>
    <property type="project" value="InterPro"/>
</dbReference>
<dbReference type="CDD" id="cd23702">
    <property type="entry name" value="eL14"/>
    <property type="match status" value="1"/>
</dbReference>
<dbReference type="Gene3D" id="2.30.30.30">
    <property type="match status" value="1"/>
</dbReference>
<dbReference type="Gene3D" id="6.10.250.2270">
    <property type="match status" value="1"/>
</dbReference>
<dbReference type="InterPro" id="IPR014722">
    <property type="entry name" value="Rib_uL2_dom2"/>
</dbReference>
<dbReference type="InterPro" id="IPR039660">
    <property type="entry name" value="Ribosomal_eL14"/>
</dbReference>
<dbReference type="InterPro" id="IPR002784">
    <property type="entry name" value="Ribosomal_eL14_dom"/>
</dbReference>
<dbReference type="InterPro" id="IPR008991">
    <property type="entry name" value="Translation_prot_SH3-like_sf"/>
</dbReference>
<dbReference type="PANTHER" id="PTHR11127">
    <property type="entry name" value="60S RIBOSOMAL PROTEIN L14"/>
    <property type="match status" value="1"/>
</dbReference>
<dbReference type="PANTHER" id="PTHR11127:SF2">
    <property type="entry name" value="LARGE RIBOSOMAL SUBUNIT PROTEIN EL14"/>
    <property type="match status" value="1"/>
</dbReference>
<dbReference type="Pfam" id="PF01929">
    <property type="entry name" value="Ribosomal_L14e"/>
    <property type="match status" value="1"/>
</dbReference>
<dbReference type="SUPFAM" id="SSF50104">
    <property type="entry name" value="Translation proteins SH3-like domain"/>
    <property type="match status" value="1"/>
</dbReference>
<organism>
    <name type="scientific">Griffithsia japonica</name>
    <name type="common">Red alga</name>
    <dbReference type="NCBI Taxonomy" id="83288"/>
    <lineage>
        <taxon>Eukaryota</taxon>
        <taxon>Rhodophyta</taxon>
        <taxon>Florideophyceae</taxon>
        <taxon>Rhodymeniophycidae</taxon>
        <taxon>Ceramiales</taxon>
        <taxon>Ceramiaceae</taxon>
        <taxon>Griffithsia</taxon>
    </lineage>
</organism>
<sequence>MTFTRFVEAGRVALVSYGEHLNKLVVIVDILDQNRILVDSPSHGLKRKVINVKRIALTSIKVDDIARGAPVAEVKSKYTAAKVDETFAASGWGKKLAKREKRAALDDFGRFKVMVARMKKSKAINAELAKLKA</sequence>